<proteinExistence type="inferred from homology"/>
<protein>
    <recommendedName>
        <fullName evidence="1">Proteasome-associated ATPase</fullName>
    </recommendedName>
    <alternativeName>
        <fullName evidence="1">AAA ATPase forming ring-shaped complexes</fullName>
        <shortName evidence="1">ARC</shortName>
    </alternativeName>
    <alternativeName>
        <fullName evidence="1">Proteasomal ATPase</fullName>
    </alternativeName>
</protein>
<gene>
    <name evidence="1" type="primary">arc</name>
    <name type="ordered locus">Tcur_2307</name>
</gene>
<keyword id="KW-0067">ATP-binding</keyword>
<keyword id="KW-0143">Chaperone</keyword>
<keyword id="KW-0175">Coiled coil</keyword>
<keyword id="KW-0547">Nucleotide-binding</keyword>
<keyword id="KW-0647">Proteasome</keyword>
<keyword id="KW-1185">Reference proteome</keyword>
<organism>
    <name type="scientific">Thermomonospora curvata (strain ATCC 19995 / DSM 43183 / JCM 3096 / KCTC 9072 / NBRC 15933 / NCIMB 10081 / Henssen B9)</name>
    <dbReference type="NCBI Taxonomy" id="471852"/>
    <lineage>
        <taxon>Bacteria</taxon>
        <taxon>Bacillati</taxon>
        <taxon>Actinomycetota</taxon>
        <taxon>Actinomycetes</taxon>
        <taxon>Streptosporangiales</taxon>
        <taxon>Thermomonosporaceae</taxon>
        <taxon>Thermomonospora</taxon>
    </lineage>
</organism>
<dbReference type="EMBL" id="CP001738">
    <property type="protein sequence ID" value="ACY97873.1"/>
    <property type="molecule type" value="Genomic_DNA"/>
</dbReference>
<dbReference type="RefSeq" id="WP_012852657.1">
    <property type="nucleotide sequence ID" value="NC_013510.1"/>
</dbReference>
<dbReference type="SMR" id="D1A2S5"/>
<dbReference type="STRING" id="471852.Tcur_2307"/>
<dbReference type="KEGG" id="tcu:Tcur_2307"/>
<dbReference type="eggNOG" id="COG1222">
    <property type="taxonomic scope" value="Bacteria"/>
</dbReference>
<dbReference type="HOGENOM" id="CLU_036054_0_0_11"/>
<dbReference type="OrthoDB" id="9809379at2"/>
<dbReference type="UniPathway" id="UPA00997"/>
<dbReference type="Proteomes" id="UP000001918">
    <property type="component" value="Chromosome"/>
</dbReference>
<dbReference type="GO" id="GO:0000502">
    <property type="term" value="C:proteasome complex"/>
    <property type="evidence" value="ECO:0007669"/>
    <property type="project" value="UniProtKB-KW"/>
</dbReference>
<dbReference type="GO" id="GO:0005524">
    <property type="term" value="F:ATP binding"/>
    <property type="evidence" value="ECO:0007669"/>
    <property type="project" value="UniProtKB-UniRule"/>
</dbReference>
<dbReference type="GO" id="GO:0016887">
    <property type="term" value="F:ATP hydrolysis activity"/>
    <property type="evidence" value="ECO:0007669"/>
    <property type="project" value="UniProtKB-UniRule"/>
</dbReference>
<dbReference type="GO" id="GO:0019941">
    <property type="term" value="P:modification-dependent protein catabolic process"/>
    <property type="evidence" value="ECO:0007669"/>
    <property type="project" value="InterPro"/>
</dbReference>
<dbReference type="GO" id="GO:0010498">
    <property type="term" value="P:proteasomal protein catabolic process"/>
    <property type="evidence" value="ECO:0007669"/>
    <property type="project" value="InterPro"/>
</dbReference>
<dbReference type="FunFam" id="3.40.50.300:FF:000155">
    <property type="entry name" value="AAA ATPase forming ring-shaped complexes"/>
    <property type="match status" value="1"/>
</dbReference>
<dbReference type="Gene3D" id="1.10.8.60">
    <property type="match status" value="1"/>
</dbReference>
<dbReference type="Gene3D" id="1.20.5.170">
    <property type="match status" value="1"/>
</dbReference>
<dbReference type="Gene3D" id="2.40.50.140">
    <property type="entry name" value="Nucleic acid-binding proteins"/>
    <property type="match status" value="2"/>
</dbReference>
<dbReference type="Gene3D" id="3.40.50.300">
    <property type="entry name" value="P-loop containing nucleotide triphosphate hydrolases"/>
    <property type="match status" value="1"/>
</dbReference>
<dbReference type="HAMAP" id="MF_02112">
    <property type="entry name" value="ARC_ATPase"/>
    <property type="match status" value="1"/>
</dbReference>
<dbReference type="InterPro" id="IPR003593">
    <property type="entry name" value="AAA+_ATPase"/>
</dbReference>
<dbReference type="InterPro" id="IPR050168">
    <property type="entry name" value="AAA_ATPase_domain"/>
</dbReference>
<dbReference type="InterPro" id="IPR003959">
    <property type="entry name" value="ATPase_AAA_core"/>
</dbReference>
<dbReference type="InterPro" id="IPR003960">
    <property type="entry name" value="ATPase_AAA_CS"/>
</dbReference>
<dbReference type="InterPro" id="IPR012340">
    <property type="entry name" value="NA-bd_OB-fold"/>
</dbReference>
<dbReference type="InterPro" id="IPR027417">
    <property type="entry name" value="P-loop_NTPase"/>
</dbReference>
<dbReference type="InterPro" id="IPR032501">
    <property type="entry name" value="Prot_ATP_ID_OB_2nd"/>
</dbReference>
<dbReference type="InterPro" id="IPR041626">
    <property type="entry name" value="Prot_ATP_ID_OB_N"/>
</dbReference>
<dbReference type="InterPro" id="IPR022482">
    <property type="entry name" value="Proteasome_ATPase"/>
</dbReference>
<dbReference type="NCBIfam" id="TIGR03689">
    <property type="entry name" value="pup_AAA"/>
    <property type="match status" value="1"/>
</dbReference>
<dbReference type="PANTHER" id="PTHR23077">
    <property type="entry name" value="AAA-FAMILY ATPASE"/>
    <property type="match status" value="1"/>
</dbReference>
<dbReference type="PANTHER" id="PTHR23077:SF144">
    <property type="entry name" value="PROTEASOME-ASSOCIATED ATPASE"/>
    <property type="match status" value="1"/>
</dbReference>
<dbReference type="Pfam" id="PF00004">
    <property type="entry name" value="AAA"/>
    <property type="match status" value="1"/>
</dbReference>
<dbReference type="Pfam" id="PF16450">
    <property type="entry name" value="Prot_ATP_ID_OB_C"/>
    <property type="match status" value="1"/>
</dbReference>
<dbReference type="Pfam" id="PF17758">
    <property type="entry name" value="Prot_ATP_ID_OB_N"/>
    <property type="match status" value="1"/>
</dbReference>
<dbReference type="SMART" id="SM00382">
    <property type="entry name" value="AAA"/>
    <property type="match status" value="1"/>
</dbReference>
<dbReference type="SUPFAM" id="SSF52540">
    <property type="entry name" value="P-loop containing nucleoside triphosphate hydrolases"/>
    <property type="match status" value="1"/>
</dbReference>
<dbReference type="PROSITE" id="PS00674">
    <property type="entry name" value="AAA"/>
    <property type="match status" value="1"/>
</dbReference>
<evidence type="ECO:0000255" key="1">
    <source>
        <dbReference type="HAMAP-Rule" id="MF_02112"/>
    </source>
</evidence>
<name>ARC_THECD</name>
<reference key="1">
    <citation type="journal article" date="2011" name="Stand. Genomic Sci.">
        <title>Complete genome sequence of Thermomonospora curvata type strain (B9).</title>
        <authorList>
            <person name="Chertkov O."/>
            <person name="Sikorski J."/>
            <person name="Nolan M."/>
            <person name="Lapidus A."/>
            <person name="Lucas S."/>
            <person name="Del Rio T.G."/>
            <person name="Tice H."/>
            <person name="Cheng J.F."/>
            <person name="Goodwin L."/>
            <person name="Pitluck S."/>
            <person name="Liolios K."/>
            <person name="Ivanova N."/>
            <person name="Mavromatis K."/>
            <person name="Mikhailova N."/>
            <person name="Ovchinnikova G."/>
            <person name="Pati A."/>
            <person name="Chen A."/>
            <person name="Palaniappan K."/>
            <person name="Djao O.D."/>
            <person name="Land M."/>
            <person name="Hauser L."/>
            <person name="Chang Y.J."/>
            <person name="Jeffries C.D."/>
            <person name="Brettin T."/>
            <person name="Han C."/>
            <person name="Detter J.C."/>
            <person name="Rohde M."/>
            <person name="Goeker M."/>
            <person name="Woyke T."/>
            <person name="Bristow J."/>
            <person name="Eisen J.A."/>
            <person name="Markowitz V."/>
            <person name="Hugenholtz P."/>
            <person name="Klenk H.P."/>
            <person name="Kyrpides N.C."/>
        </authorList>
    </citation>
    <scope>NUCLEOTIDE SEQUENCE [LARGE SCALE GENOMIC DNA]</scope>
    <source>
        <strain>ATCC 19995 / DSM 43183 / JCM 3096 / KCTC 9072 / NBRC 15933 / NCIMB 10081 / Henssen B9</strain>
    </source>
</reference>
<feature type="chain" id="PRO_0000397028" description="Proteasome-associated ATPase">
    <location>
        <begin position="1"/>
        <end position="587"/>
    </location>
</feature>
<feature type="region of interest" description="Docks into pockets in the proteasome alpha-ring" evidence="1">
    <location>
        <begin position="586"/>
        <end position="587"/>
    </location>
</feature>
<feature type="coiled-coil region" evidence="1">
    <location>
        <begin position="9"/>
        <end position="94"/>
    </location>
</feature>
<feature type="binding site" evidence="1">
    <location>
        <begin position="276"/>
        <end position="281"/>
    </location>
    <ligand>
        <name>ATP</name>
        <dbReference type="ChEBI" id="CHEBI:30616"/>
    </ligand>
</feature>
<sequence length="587" mass="65001">MAARDDAGARKAQHDAEIHDLRSQVSMLEEEVSVLRRKLAESPRQIRVLEDRLHETQAKLAAVTGQNERLVATLKEAREQIIALKEEVDRLAQPPSGFGVFLGAREDGTVDIFTGGRKLRVNVSPSVDVSQLKQGQEVLLNEALNVVEALGYETQGEVVMLKELFDDGERALVIAHADEERVIKLAEPLRGVPLRAGDSLMLEPRSGYAYEKIHKAEVEELVLEEVPDITYEEIGGLGPQIEQIRDAVELPYLHADLFREHKLRPPKGVLLYGPPGCGKTLIAKAVANSLAKQVAEKTGQEGKSFFLNIKGPELLNKYVGETERHIRLVFQRAREKASAGTPVIVFFDEMDSIFRTRGSGVSSDVENTIVPQLLSEIDGVEGLENVIVIGASNREDMIDPAILRPGRLDVKIKIERPDAEAAKDIFSKYLVPGLPLHPDDLAEHGGSEEATIEAMIQRVVERMYAETEENRFLEVTYANGDKEVLYFKDFNSGAMIQNIVDRAKKMAIKQYLETGQKGLRVSHLLAACVDEFSENEDLPNTTNPDDWARISGKKGERIVYIRTLVSGKAGSEAGRSIDTVANTGQYL</sequence>
<accession>D1A2S5</accession>
<comment type="function">
    <text evidence="1">ATPase which is responsible for recognizing, binding, unfolding and translocation of pupylated proteins into the bacterial 20S proteasome core particle. May be essential for opening the gate of the 20S proteasome via an interaction with its C-terminus, thereby allowing substrate entry and access to the site of proteolysis. Thus, the C-termini of the proteasomal ATPase may function like a 'key in a lock' to induce gate opening and therefore regulate proteolysis.</text>
</comment>
<comment type="pathway">
    <text evidence="1">Protein degradation; proteasomal Pup-dependent pathway.</text>
</comment>
<comment type="subunit">
    <text evidence="1">Homohexamer. Assembles into a hexameric ring structure that caps the 20S proteasome core. Strongly interacts with the prokaryotic ubiquitin-like protein Pup through a hydrophobic interface; the interacting region of ARC lies in its N-terminal coiled-coil domain. There is one Pup binding site per ARC hexamer ring. Upon ATP-binding, the C-terminus of ARC interacts with the alpha-rings of the proteasome core, possibly by binding to the intersubunit pockets.</text>
</comment>
<comment type="domain">
    <text evidence="1">Consists of three main regions, an N-terminal coiled-coil domain that binds to protein Pup and functions as a docking station, an interdomain involved in ARC hexamerization, and a C-terminal ATPase domain of the AAA type.</text>
</comment>
<comment type="similarity">
    <text evidence="1">Belongs to the AAA ATPase family.</text>
</comment>